<organism>
    <name type="scientific">Wolbachia sp. subsp. Drosophila simulans (strain wRi)</name>
    <dbReference type="NCBI Taxonomy" id="66084"/>
    <lineage>
        <taxon>Bacteria</taxon>
        <taxon>Pseudomonadati</taxon>
        <taxon>Pseudomonadota</taxon>
        <taxon>Alphaproteobacteria</taxon>
        <taxon>Rickettsiales</taxon>
        <taxon>Anaplasmataceae</taxon>
        <taxon>Wolbachieae</taxon>
        <taxon>Wolbachia</taxon>
    </lineage>
</organism>
<feature type="chain" id="PRO_1000122545" description="Aspartyl/glutamyl-tRNA(Asn/Gln) amidotransferase subunit B">
    <location>
        <begin position="1"/>
        <end position="473"/>
    </location>
</feature>
<reference key="1">
    <citation type="journal article" date="2009" name="Proc. Natl. Acad. Sci. U.S.A.">
        <title>The mosaic genome structure of the Wolbachia wRi strain infecting Drosophila simulans.</title>
        <authorList>
            <person name="Klasson L."/>
            <person name="Westberg J."/>
            <person name="Sapountzis P."/>
            <person name="Naeslund K."/>
            <person name="Lutnaes Y."/>
            <person name="Darby A.C."/>
            <person name="Veneti Z."/>
            <person name="Chen L."/>
            <person name="Braig H.R."/>
            <person name="Garrett R."/>
            <person name="Bourtzis K."/>
            <person name="Andersson S.G."/>
        </authorList>
    </citation>
    <scope>NUCLEOTIDE SEQUENCE [LARGE SCALE GENOMIC DNA]</scope>
    <source>
        <strain>wRi</strain>
    </source>
</reference>
<comment type="function">
    <text evidence="1">Allows the formation of correctly charged Asn-tRNA(Asn) or Gln-tRNA(Gln) through the transamidation of misacylated Asp-tRNA(Asn) or Glu-tRNA(Gln) in organisms which lack either or both of asparaginyl-tRNA or glutaminyl-tRNA synthetases. The reaction takes place in the presence of glutamine and ATP through an activated phospho-Asp-tRNA(Asn) or phospho-Glu-tRNA(Gln).</text>
</comment>
<comment type="catalytic activity">
    <reaction evidence="1">
        <text>L-glutamyl-tRNA(Gln) + L-glutamine + ATP + H2O = L-glutaminyl-tRNA(Gln) + L-glutamate + ADP + phosphate + H(+)</text>
        <dbReference type="Rhea" id="RHEA:17521"/>
        <dbReference type="Rhea" id="RHEA-COMP:9681"/>
        <dbReference type="Rhea" id="RHEA-COMP:9684"/>
        <dbReference type="ChEBI" id="CHEBI:15377"/>
        <dbReference type="ChEBI" id="CHEBI:15378"/>
        <dbReference type="ChEBI" id="CHEBI:29985"/>
        <dbReference type="ChEBI" id="CHEBI:30616"/>
        <dbReference type="ChEBI" id="CHEBI:43474"/>
        <dbReference type="ChEBI" id="CHEBI:58359"/>
        <dbReference type="ChEBI" id="CHEBI:78520"/>
        <dbReference type="ChEBI" id="CHEBI:78521"/>
        <dbReference type="ChEBI" id="CHEBI:456216"/>
    </reaction>
</comment>
<comment type="catalytic activity">
    <reaction evidence="1">
        <text>L-aspartyl-tRNA(Asn) + L-glutamine + ATP + H2O = L-asparaginyl-tRNA(Asn) + L-glutamate + ADP + phosphate + 2 H(+)</text>
        <dbReference type="Rhea" id="RHEA:14513"/>
        <dbReference type="Rhea" id="RHEA-COMP:9674"/>
        <dbReference type="Rhea" id="RHEA-COMP:9677"/>
        <dbReference type="ChEBI" id="CHEBI:15377"/>
        <dbReference type="ChEBI" id="CHEBI:15378"/>
        <dbReference type="ChEBI" id="CHEBI:29985"/>
        <dbReference type="ChEBI" id="CHEBI:30616"/>
        <dbReference type="ChEBI" id="CHEBI:43474"/>
        <dbReference type="ChEBI" id="CHEBI:58359"/>
        <dbReference type="ChEBI" id="CHEBI:78515"/>
        <dbReference type="ChEBI" id="CHEBI:78516"/>
        <dbReference type="ChEBI" id="CHEBI:456216"/>
    </reaction>
</comment>
<comment type="subunit">
    <text evidence="1">Heterotrimer of A, B and C subunits.</text>
</comment>
<comment type="similarity">
    <text evidence="1">Belongs to the GatB/GatE family. GatB subfamily.</text>
</comment>
<evidence type="ECO:0000255" key="1">
    <source>
        <dbReference type="HAMAP-Rule" id="MF_00121"/>
    </source>
</evidence>
<sequence length="473" mass="53260">MTKEDWEAVIGLEVHAQVSSNTKLFSSSSTEFGAEHNTQVSLVDAAMPGTLPILNYYCIEQAIRTGLALSAEINKYSYFDRKNYFYPDLPQGYQITQFFEPIVKNGRVFINDNEKEIRIARIHLEQDAGKSVHEESKTYVDLNRAGVALIEIVSEPDLRSSAEAAECMKKLRQILRYTGSCDGDMEKGSLRCDANVSVRLKGSNTFGTRCEIKNLNSIRHIVQAIDYEIQRQIEILESGEEISQDTLLFDVASGKTKVMRSKEDASDYRYFPEPDLLPVEVSQEKIDLIQSSLPELPDQKKLRYIEELGINEYDANVITSDKAIADYFEELIKKHDSKLAVTWLTVELFGRLNKANIDIVSSPIKANALSELLDFIVDGTISAKLGKQVFDIMFETGKPASLIIEEQDLKQITDKCQISEVIDKIINSNQDKVQEYKSGKTRLYGFFVGEVMKLTKGKASPDVVNSILSERLG</sequence>
<dbReference type="EC" id="6.3.5.-" evidence="1"/>
<dbReference type="EMBL" id="CP001391">
    <property type="protein sequence ID" value="ACN94961.1"/>
    <property type="molecule type" value="Genomic_DNA"/>
</dbReference>
<dbReference type="RefSeq" id="WP_007548988.1">
    <property type="nucleotide sequence ID" value="NZ_MKIF01000057.1"/>
</dbReference>
<dbReference type="SMR" id="C0R5B9"/>
<dbReference type="STRING" id="66084.WRi_001070"/>
<dbReference type="KEGG" id="wri:WRi_001070"/>
<dbReference type="HOGENOM" id="CLU_019240_0_0_5"/>
<dbReference type="Proteomes" id="UP000001293">
    <property type="component" value="Chromosome"/>
</dbReference>
<dbReference type="GO" id="GO:0050566">
    <property type="term" value="F:asparaginyl-tRNA synthase (glutamine-hydrolyzing) activity"/>
    <property type="evidence" value="ECO:0007669"/>
    <property type="project" value="RHEA"/>
</dbReference>
<dbReference type="GO" id="GO:0005524">
    <property type="term" value="F:ATP binding"/>
    <property type="evidence" value="ECO:0007669"/>
    <property type="project" value="UniProtKB-KW"/>
</dbReference>
<dbReference type="GO" id="GO:0050567">
    <property type="term" value="F:glutaminyl-tRNA synthase (glutamine-hydrolyzing) activity"/>
    <property type="evidence" value="ECO:0007669"/>
    <property type="project" value="UniProtKB-UniRule"/>
</dbReference>
<dbReference type="GO" id="GO:0070681">
    <property type="term" value="P:glutaminyl-tRNAGln biosynthesis via transamidation"/>
    <property type="evidence" value="ECO:0007669"/>
    <property type="project" value="TreeGrafter"/>
</dbReference>
<dbReference type="GO" id="GO:0006412">
    <property type="term" value="P:translation"/>
    <property type="evidence" value="ECO:0007669"/>
    <property type="project" value="UniProtKB-UniRule"/>
</dbReference>
<dbReference type="FunFam" id="1.10.10.410:FF:000001">
    <property type="entry name" value="Aspartyl/glutamyl-tRNA(Asn/Gln) amidotransferase subunit B"/>
    <property type="match status" value="1"/>
</dbReference>
<dbReference type="FunFam" id="1.10.150.380:FF:000001">
    <property type="entry name" value="Aspartyl/glutamyl-tRNA(Asn/Gln) amidotransferase subunit B"/>
    <property type="match status" value="1"/>
</dbReference>
<dbReference type="Gene3D" id="1.10.10.410">
    <property type="match status" value="1"/>
</dbReference>
<dbReference type="Gene3D" id="1.10.150.380">
    <property type="entry name" value="GatB domain, N-terminal subdomain"/>
    <property type="match status" value="1"/>
</dbReference>
<dbReference type="HAMAP" id="MF_00121">
    <property type="entry name" value="GatB"/>
    <property type="match status" value="1"/>
</dbReference>
<dbReference type="InterPro" id="IPR017959">
    <property type="entry name" value="Asn/Gln-tRNA_amidoTrfase_suB/E"/>
</dbReference>
<dbReference type="InterPro" id="IPR006075">
    <property type="entry name" value="Asn/Gln-tRNA_Trfase_suB/E_cat"/>
</dbReference>
<dbReference type="InterPro" id="IPR018027">
    <property type="entry name" value="Asn/Gln_amidotransferase"/>
</dbReference>
<dbReference type="InterPro" id="IPR003789">
    <property type="entry name" value="Asn/Gln_tRNA_amidoTrase-B-like"/>
</dbReference>
<dbReference type="InterPro" id="IPR004413">
    <property type="entry name" value="GatB"/>
</dbReference>
<dbReference type="InterPro" id="IPR042114">
    <property type="entry name" value="GatB_C_1"/>
</dbReference>
<dbReference type="InterPro" id="IPR023168">
    <property type="entry name" value="GatB_Yqey_C_2"/>
</dbReference>
<dbReference type="InterPro" id="IPR017958">
    <property type="entry name" value="Gln-tRNA_amidoTrfase_suB_CS"/>
</dbReference>
<dbReference type="InterPro" id="IPR014746">
    <property type="entry name" value="Gln_synth/guanido_kin_cat_dom"/>
</dbReference>
<dbReference type="NCBIfam" id="TIGR00133">
    <property type="entry name" value="gatB"/>
    <property type="match status" value="1"/>
</dbReference>
<dbReference type="NCBIfam" id="NF004012">
    <property type="entry name" value="PRK05477.1-2"/>
    <property type="match status" value="1"/>
</dbReference>
<dbReference type="NCBIfam" id="NF004014">
    <property type="entry name" value="PRK05477.1-4"/>
    <property type="match status" value="1"/>
</dbReference>
<dbReference type="NCBIfam" id="NF004015">
    <property type="entry name" value="PRK05477.1-5"/>
    <property type="match status" value="1"/>
</dbReference>
<dbReference type="PANTHER" id="PTHR11659">
    <property type="entry name" value="GLUTAMYL-TRNA GLN AMIDOTRANSFERASE SUBUNIT B MITOCHONDRIAL AND PROKARYOTIC PET112-RELATED"/>
    <property type="match status" value="1"/>
</dbReference>
<dbReference type="PANTHER" id="PTHR11659:SF0">
    <property type="entry name" value="GLUTAMYL-TRNA(GLN) AMIDOTRANSFERASE SUBUNIT B, MITOCHONDRIAL"/>
    <property type="match status" value="1"/>
</dbReference>
<dbReference type="Pfam" id="PF02934">
    <property type="entry name" value="GatB_N"/>
    <property type="match status" value="1"/>
</dbReference>
<dbReference type="Pfam" id="PF02637">
    <property type="entry name" value="GatB_Yqey"/>
    <property type="match status" value="1"/>
</dbReference>
<dbReference type="SMART" id="SM00845">
    <property type="entry name" value="GatB_Yqey"/>
    <property type="match status" value="1"/>
</dbReference>
<dbReference type="SUPFAM" id="SSF89095">
    <property type="entry name" value="GatB/YqeY motif"/>
    <property type="match status" value="1"/>
</dbReference>
<dbReference type="SUPFAM" id="SSF55931">
    <property type="entry name" value="Glutamine synthetase/guanido kinase"/>
    <property type="match status" value="1"/>
</dbReference>
<dbReference type="PROSITE" id="PS01234">
    <property type="entry name" value="GATB"/>
    <property type="match status" value="1"/>
</dbReference>
<gene>
    <name evidence="1" type="primary">gatB</name>
    <name type="ordered locus">WRi_001070</name>
</gene>
<protein>
    <recommendedName>
        <fullName evidence="1">Aspartyl/glutamyl-tRNA(Asn/Gln) amidotransferase subunit B</fullName>
        <shortName evidence="1">Asp/Glu-ADT subunit B</shortName>
        <ecNumber evidence="1">6.3.5.-</ecNumber>
    </recommendedName>
</protein>
<accession>C0R5B9</accession>
<name>GATB_WOLWR</name>
<keyword id="KW-0067">ATP-binding</keyword>
<keyword id="KW-0436">Ligase</keyword>
<keyword id="KW-0547">Nucleotide-binding</keyword>
<keyword id="KW-0648">Protein biosynthesis</keyword>
<proteinExistence type="inferred from homology"/>